<name>YACG_CHRVO</name>
<protein>
    <recommendedName>
        <fullName evidence="1">DNA gyrase inhibitor YacG</fullName>
    </recommendedName>
</protein>
<accession>Q7NRF8</accession>
<evidence type="ECO:0000255" key="1">
    <source>
        <dbReference type="HAMAP-Rule" id="MF_00649"/>
    </source>
</evidence>
<sequence length="63" mass="7273">MSESVRIVACPTCKAEVRWEPQSRYRPFCSERCRLIDLGQWASESYRVPAEEDHPPGETPPTH</sequence>
<organism>
    <name type="scientific">Chromobacterium violaceum (strain ATCC 12472 / DSM 30191 / JCM 1249 / CCUG 213 / NBRC 12614 / NCIMB 9131 / NCTC 9757 / MK)</name>
    <dbReference type="NCBI Taxonomy" id="243365"/>
    <lineage>
        <taxon>Bacteria</taxon>
        <taxon>Pseudomonadati</taxon>
        <taxon>Pseudomonadota</taxon>
        <taxon>Betaproteobacteria</taxon>
        <taxon>Neisseriales</taxon>
        <taxon>Chromobacteriaceae</taxon>
        <taxon>Chromobacterium</taxon>
    </lineage>
</organism>
<reference key="1">
    <citation type="journal article" date="2003" name="Proc. Natl. Acad. Sci. U.S.A.">
        <title>The complete genome sequence of Chromobacterium violaceum reveals remarkable and exploitable bacterial adaptability.</title>
        <authorList>
            <person name="Vasconcelos A.T.R."/>
            <person name="de Almeida D.F."/>
            <person name="Hungria M."/>
            <person name="Guimaraes C.T."/>
            <person name="Antonio R.V."/>
            <person name="Almeida F.C."/>
            <person name="de Almeida L.G.P."/>
            <person name="de Almeida R."/>
            <person name="Alves-Gomes J.A."/>
            <person name="Andrade E.M."/>
            <person name="Araripe J."/>
            <person name="de Araujo M.F.F."/>
            <person name="Astolfi-Filho S."/>
            <person name="Azevedo V."/>
            <person name="Baptista A.J."/>
            <person name="Bataus L.A.M."/>
            <person name="Batista J.S."/>
            <person name="Belo A."/>
            <person name="van den Berg C."/>
            <person name="Bogo M."/>
            <person name="Bonatto S."/>
            <person name="Bordignon J."/>
            <person name="Brigido M.M."/>
            <person name="Brito C.A."/>
            <person name="Brocchi M."/>
            <person name="Burity H.A."/>
            <person name="Camargo A.A."/>
            <person name="Cardoso D.D.P."/>
            <person name="Carneiro N.P."/>
            <person name="Carraro D.M."/>
            <person name="Carvalho C.M.B."/>
            <person name="Cascardo J.C.M."/>
            <person name="Cavada B.S."/>
            <person name="Chueire L.M.O."/>
            <person name="Creczynski-Pasa T.B."/>
            <person name="Cunha-Junior N.C."/>
            <person name="Fagundes N."/>
            <person name="Falcao C.L."/>
            <person name="Fantinatti F."/>
            <person name="Farias I.P."/>
            <person name="Felipe M.S.S."/>
            <person name="Ferrari L.P."/>
            <person name="Ferro J.A."/>
            <person name="Ferro M.I.T."/>
            <person name="Franco G.R."/>
            <person name="Freitas N.S.A."/>
            <person name="Furlan L.R."/>
            <person name="Gazzinelli R.T."/>
            <person name="Gomes E.A."/>
            <person name="Goncalves P.R."/>
            <person name="Grangeiro T.B."/>
            <person name="Grattapaglia D."/>
            <person name="Grisard E.C."/>
            <person name="Hanna E.S."/>
            <person name="Jardim S.N."/>
            <person name="Laurino J."/>
            <person name="Leoi L.C.T."/>
            <person name="Lima L.F.A."/>
            <person name="Loureiro M.F."/>
            <person name="Lyra M.C.C.P."/>
            <person name="Madeira H.M.F."/>
            <person name="Manfio G.P."/>
            <person name="Maranhao A.Q."/>
            <person name="Martins W.S."/>
            <person name="di Mauro S.M.Z."/>
            <person name="de Medeiros S.R.B."/>
            <person name="Meissner R.V."/>
            <person name="Moreira M.A.M."/>
            <person name="Nascimento F.F."/>
            <person name="Nicolas M.F."/>
            <person name="Oliveira J.G."/>
            <person name="Oliveira S.C."/>
            <person name="Paixao R.F.C."/>
            <person name="Parente J.A."/>
            <person name="Pedrosa F.O."/>
            <person name="Pena S.D.J."/>
            <person name="Pereira J.O."/>
            <person name="Pereira M."/>
            <person name="Pinto L.S.R.C."/>
            <person name="Pinto L.S."/>
            <person name="Porto J.I.R."/>
            <person name="Potrich D.P."/>
            <person name="Ramalho-Neto C.E."/>
            <person name="Reis A.M.M."/>
            <person name="Rigo L.U."/>
            <person name="Rondinelli E."/>
            <person name="Santos E.B.P."/>
            <person name="Santos F.R."/>
            <person name="Schneider M.P.C."/>
            <person name="Seuanez H.N."/>
            <person name="Silva A.M.R."/>
            <person name="da Silva A.L.C."/>
            <person name="Silva D.W."/>
            <person name="Silva R."/>
            <person name="Simoes I.C."/>
            <person name="Simon D."/>
            <person name="Soares C.M.A."/>
            <person name="Soares R.B.A."/>
            <person name="Souza E.M."/>
            <person name="Souza K.R.L."/>
            <person name="Souza R.C."/>
            <person name="Steffens M.B.R."/>
            <person name="Steindel M."/>
            <person name="Teixeira S.R."/>
            <person name="Urmenyi T."/>
            <person name="Vettore A."/>
            <person name="Wassem R."/>
            <person name="Zaha A."/>
            <person name="Simpson A.J.G."/>
        </authorList>
    </citation>
    <scope>NUCLEOTIDE SEQUENCE [LARGE SCALE GENOMIC DNA]</scope>
    <source>
        <strain>ATCC 12472 / DSM 30191 / JCM 1249 / CCUG 213 / NBRC 12614 / NCIMB 9131 / NCTC 9757 / MK</strain>
    </source>
</reference>
<proteinExistence type="inferred from homology"/>
<dbReference type="EMBL" id="AE016825">
    <property type="protein sequence ID" value="AAQ61485.1"/>
    <property type="molecule type" value="Genomic_DNA"/>
</dbReference>
<dbReference type="RefSeq" id="WP_011137370.1">
    <property type="nucleotide sequence ID" value="NC_005085.1"/>
</dbReference>
<dbReference type="SMR" id="Q7NRF8"/>
<dbReference type="STRING" id="243365.CV_3823"/>
<dbReference type="GeneID" id="66365058"/>
<dbReference type="KEGG" id="cvi:CV_3823"/>
<dbReference type="eggNOG" id="COG3024">
    <property type="taxonomic scope" value="Bacteria"/>
</dbReference>
<dbReference type="HOGENOM" id="CLU_178280_3_2_4"/>
<dbReference type="OrthoDB" id="9809663at2"/>
<dbReference type="Proteomes" id="UP000001424">
    <property type="component" value="Chromosome"/>
</dbReference>
<dbReference type="GO" id="GO:0008657">
    <property type="term" value="F:DNA topoisomerase type II (double strand cut, ATP-hydrolyzing) inhibitor activity"/>
    <property type="evidence" value="ECO:0007669"/>
    <property type="project" value="UniProtKB-UniRule"/>
</dbReference>
<dbReference type="GO" id="GO:0008270">
    <property type="term" value="F:zinc ion binding"/>
    <property type="evidence" value="ECO:0007669"/>
    <property type="project" value="UniProtKB-UniRule"/>
</dbReference>
<dbReference type="GO" id="GO:0006355">
    <property type="term" value="P:regulation of DNA-templated transcription"/>
    <property type="evidence" value="ECO:0007669"/>
    <property type="project" value="InterPro"/>
</dbReference>
<dbReference type="Gene3D" id="3.30.50.10">
    <property type="entry name" value="Erythroid Transcription Factor GATA-1, subunit A"/>
    <property type="match status" value="1"/>
</dbReference>
<dbReference type="HAMAP" id="MF_00649">
    <property type="entry name" value="DNA_gyrase_inhibitor_YacG"/>
    <property type="match status" value="1"/>
</dbReference>
<dbReference type="InterPro" id="IPR005584">
    <property type="entry name" value="DNA_gyrase_inhibitor_YacG"/>
</dbReference>
<dbReference type="InterPro" id="IPR013088">
    <property type="entry name" value="Znf_NHR/GATA"/>
</dbReference>
<dbReference type="NCBIfam" id="NF001638">
    <property type="entry name" value="PRK00418.1"/>
    <property type="match status" value="1"/>
</dbReference>
<dbReference type="PANTHER" id="PTHR36150">
    <property type="entry name" value="DNA GYRASE INHIBITOR YACG"/>
    <property type="match status" value="1"/>
</dbReference>
<dbReference type="PANTHER" id="PTHR36150:SF1">
    <property type="entry name" value="DNA GYRASE INHIBITOR YACG"/>
    <property type="match status" value="1"/>
</dbReference>
<dbReference type="Pfam" id="PF03884">
    <property type="entry name" value="YacG"/>
    <property type="match status" value="1"/>
</dbReference>
<dbReference type="SUPFAM" id="SSF57716">
    <property type="entry name" value="Glucocorticoid receptor-like (DNA-binding domain)"/>
    <property type="match status" value="1"/>
</dbReference>
<comment type="function">
    <text evidence="1">Inhibits all the catalytic activities of DNA gyrase by preventing its interaction with DNA. Acts by binding directly to the C-terminal domain of GyrB, which probably disrupts DNA binding by the gyrase.</text>
</comment>
<comment type="cofactor">
    <cofactor evidence="1">
        <name>Zn(2+)</name>
        <dbReference type="ChEBI" id="CHEBI:29105"/>
    </cofactor>
    <text evidence="1">Binds 1 zinc ion.</text>
</comment>
<comment type="subunit">
    <text evidence="1">Interacts with GyrB.</text>
</comment>
<comment type="similarity">
    <text evidence="1">Belongs to the DNA gyrase inhibitor YacG family.</text>
</comment>
<keyword id="KW-0479">Metal-binding</keyword>
<keyword id="KW-1185">Reference proteome</keyword>
<keyword id="KW-0862">Zinc</keyword>
<feature type="chain" id="PRO_0000211694" description="DNA gyrase inhibitor YacG">
    <location>
        <begin position="1"/>
        <end position="63"/>
    </location>
</feature>
<feature type="binding site" evidence="1">
    <location>
        <position position="10"/>
    </location>
    <ligand>
        <name>Zn(2+)</name>
        <dbReference type="ChEBI" id="CHEBI:29105"/>
    </ligand>
</feature>
<feature type="binding site" evidence="1">
    <location>
        <position position="13"/>
    </location>
    <ligand>
        <name>Zn(2+)</name>
        <dbReference type="ChEBI" id="CHEBI:29105"/>
    </ligand>
</feature>
<feature type="binding site" evidence="1">
    <location>
        <position position="29"/>
    </location>
    <ligand>
        <name>Zn(2+)</name>
        <dbReference type="ChEBI" id="CHEBI:29105"/>
    </ligand>
</feature>
<feature type="binding site" evidence="1">
    <location>
        <position position="33"/>
    </location>
    <ligand>
        <name>Zn(2+)</name>
        <dbReference type="ChEBI" id="CHEBI:29105"/>
    </ligand>
</feature>
<gene>
    <name evidence="1" type="primary">yacG</name>
    <name type="ordered locus">CV_3823</name>
</gene>